<dbReference type="EC" id="2.7.1.16" evidence="1"/>
<dbReference type="EMBL" id="AP008934">
    <property type="protein sequence ID" value="BAE17708.1"/>
    <property type="molecule type" value="Genomic_DNA"/>
</dbReference>
<dbReference type="RefSeq" id="WP_011302511.1">
    <property type="nucleotide sequence ID" value="NC_007350.1"/>
</dbReference>
<dbReference type="SMR" id="Q49ZR6"/>
<dbReference type="GeneID" id="3616856"/>
<dbReference type="KEGG" id="ssp:SSP0563"/>
<dbReference type="PATRIC" id="fig|342451.11.peg.568"/>
<dbReference type="eggNOG" id="COG1069">
    <property type="taxonomic scope" value="Bacteria"/>
</dbReference>
<dbReference type="HOGENOM" id="CLU_009281_9_1_9"/>
<dbReference type="OrthoDB" id="9805576at2"/>
<dbReference type="UniPathway" id="UPA00145">
    <property type="reaction ID" value="UER00566"/>
</dbReference>
<dbReference type="Proteomes" id="UP000006371">
    <property type="component" value="Chromosome"/>
</dbReference>
<dbReference type="GO" id="GO:0005737">
    <property type="term" value="C:cytoplasm"/>
    <property type="evidence" value="ECO:0007669"/>
    <property type="project" value="TreeGrafter"/>
</dbReference>
<dbReference type="GO" id="GO:0005524">
    <property type="term" value="F:ATP binding"/>
    <property type="evidence" value="ECO:0007669"/>
    <property type="project" value="UniProtKB-KW"/>
</dbReference>
<dbReference type="GO" id="GO:0019150">
    <property type="term" value="F:D-ribulokinase activity"/>
    <property type="evidence" value="ECO:0007669"/>
    <property type="project" value="RHEA"/>
</dbReference>
<dbReference type="GO" id="GO:0008741">
    <property type="term" value="F:ribulokinase activity"/>
    <property type="evidence" value="ECO:0007669"/>
    <property type="project" value="UniProtKB-UniRule"/>
</dbReference>
<dbReference type="GO" id="GO:0019569">
    <property type="term" value="P:L-arabinose catabolic process to xylulose 5-phosphate"/>
    <property type="evidence" value="ECO:0007669"/>
    <property type="project" value="UniProtKB-UniRule"/>
</dbReference>
<dbReference type="CDD" id="cd07781">
    <property type="entry name" value="ASKHA_NBD_FGGY_L-RBK"/>
    <property type="match status" value="1"/>
</dbReference>
<dbReference type="Gene3D" id="3.30.420.40">
    <property type="match status" value="2"/>
</dbReference>
<dbReference type="HAMAP" id="MF_00520">
    <property type="entry name" value="Ribulokinase"/>
    <property type="match status" value="1"/>
</dbReference>
<dbReference type="InterPro" id="IPR043129">
    <property type="entry name" value="ATPase_NBD"/>
</dbReference>
<dbReference type="InterPro" id="IPR000577">
    <property type="entry name" value="Carb_kinase_FGGY"/>
</dbReference>
<dbReference type="InterPro" id="IPR018485">
    <property type="entry name" value="FGGY_C"/>
</dbReference>
<dbReference type="InterPro" id="IPR018484">
    <property type="entry name" value="FGGY_N"/>
</dbReference>
<dbReference type="InterPro" id="IPR005929">
    <property type="entry name" value="Ribulokinase"/>
</dbReference>
<dbReference type="NCBIfam" id="NF003154">
    <property type="entry name" value="PRK04123.1"/>
    <property type="match status" value="1"/>
</dbReference>
<dbReference type="PANTHER" id="PTHR43435:SF4">
    <property type="entry name" value="FGGY CARBOHYDRATE KINASE DOMAIN-CONTAINING PROTEIN"/>
    <property type="match status" value="1"/>
</dbReference>
<dbReference type="PANTHER" id="PTHR43435">
    <property type="entry name" value="RIBULOKINASE"/>
    <property type="match status" value="1"/>
</dbReference>
<dbReference type="Pfam" id="PF02782">
    <property type="entry name" value="FGGY_C"/>
    <property type="match status" value="1"/>
</dbReference>
<dbReference type="Pfam" id="PF00370">
    <property type="entry name" value="FGGY_N"/>
    <property type="match status" value="1"/>
</dbReference>
<dbReference type="PIRSF" id="PIRSF000538">
    <property type="entry name" value="GlpK"/>
    <property type="match status" value="1"/>
</dbReference>
<dbReference type="SUPFAM" id="SSF53067">
    <property type="entry name" value="Actin-like ATPase domain"/>
    <property type="match status" value="2"/>
</dbReference>
<name>ARAB1_STAS1</name>
<keyword id="KW-0054">Arabinose catabolism</keyword>
<keyword id="KW-0067">ATP-binding</keyword>
<keyword id="KW-0119">Carbohydrate metabolism</keyword>
<keyword id="KW-0418">Kinase</keyword>
<keyword id="KW-0547">Nucleotide-binding</keyword>
<keyword id="KW-1185">Reference proteome</keyword>
<keyword id="KW-0808">Transferase</keyword>
<feature type="chain" id="PRO_0000198374" description="Ribulokinase 1">
    <location>
        <begin position="1"/>
        <end position="538"/>
    </location>
</feature>
<sequence length="538" mass="59629">MTYSIGIDYGTASGRVFLVDTTNGEIISTYIKEYPHGTISESLNGTELPHNYFLQHAADYTSILEEGVQYVLKDSQVDPKSIIGIGIDFTSCTIVFLDDDFKPLHLHPDLEDQPHAYVKLWKHHGAQDEATYMKQVSDKVNPSWLNFYGHNVNSEWMIPKILEVKNKAPEVLERSAYIMEAGDYLVSLLTDKNIRSNCGIGFKGFYNETDGFNYSFFEAIDQELPEIVKTKCESPVVNIGESAGSLSPYYQNLWGLTEQVQISPYIIDAHSGVLGVGAIEQGEFTPVIGTSTCHLMLDPKQEPIPAITGSVKDAIIPGLYAYEAGQAAVGDLFNYSASLAPKSYVDQAEKQGLSILGYLEKLAADISIDKQHVTVLDWHNGNRSILSDSKLTGSIFGLTLQTPFEMIHKAYLESTAFGTKMIMQQFENNHIPVETVYAAGGIPIKSELLVDIYANVLNKEVVVIDSSNATALGAAMLGANVGGAYPTLKETVKHMKQPVYYRKQPEAKKVKQYALLFDRYKALHDLLGKEYPQLSYIN</sequence>
<evidence type="ECO:0000255" key="1">
    <source>
        <dbReference type="HAMAP-Rule" id="MF_00520"/>
    </source>
</evidence>
<accession>Q49ZR6</accession>
<proteinExistence type="inferred from homology"/>
<gene>
    <name evidence="1" type="primary">araB1</name>
    <name type="ordered locus">SSP0563</name>
</gene>
<protein>
    <recommendedName>
        <fullName evidence="1">Ribulokinase 1</fullName>
        <ecNumber evidence="1">2.7.1.16</ecNumber>
    </recommendedName>
</protein>
<organism>
    <name type="scientific">Staphylococcus saprophyticus subsp. saprophyticus (strain ATCC 15305 / DSM 20229 / NCIMB 8711 / NCTC 7292 / S-41)</name>
    <dbReference type="NCBI Taxonomy" id="342451"/>
    <lineage>
        <taxon>Bacteria</taxon>
        <taxon>Bacillati</taxon>
        <taxon>Bacillota</taxon>
        <taxon>Bacilli</taxon>
        <taxon>Bacillales</taxon>
        <taxon>Staphylococcaceae</taxon>
        <taxon>Staphylococcus</taxon>
    </lineage>
</organism>
<reference key="1">
    <citation type="journal article" date="2005" name="Proc. Natl. Acad. Sci. U.S.A.">
        <title>Whole genome sequence of Staphylococcus saprophyticus reveals the pathogenesis of uncomplicated urinary tract infection.</title>
        <authorList>
            <person name="Kuroda M."/>
            <person name="Yamashita A."/>
            <person name="Hirakawa H."/>
            <person name="Kumano M."/>
            <person name="Morikawa K."/>
            <person name="Higashide M."/>
            <person name="Maruyama A."/>
            <person name="Inose Y."/>
            <person name="Matoba K."/>
            <person name="Toh H."/>
            <person name="Kuhara S."/>
            <person name="Hattori M."/>
            <person name="Ohta T."/>
        </authorList>
    </citation>
    <scope>NUCLEOTIDE SEQUENCE [LARGE SCALE GENOMIC DNA]</scope>
    <source>
        <strain>ATCC 15305 / DSM 20229 / NCIMB 8711 / NCTC 7292 / S-41</strain>
    </source>
</reference>
<comment type="catalytic activity">
    <reaction evidence="1">
        <text>D-ribulose + ATP = D-ribulose 5-phosphate + ADP + H(+)</text>
        <dbReference type="Rhea" id="RHEA:17601"/>
        <dbReference type="ChEBI" id="CHEBI:15378"/>
        <dbReference type="ChEBI" id="CHEBI:17173"/>
        <dbReference type="ChEBI" id="CHEBI:30616"/>
        <dbReference type="ChEBI" id="CHEBI:58121"/>
        <dbReference type="ChEBI" id="CHEBI:456216"/>
        <dbReference type="EC" id="2.7.1.16"/>
    </reaction>
</comment>
<comment type="catalytic activity">
    <reaction evidence="1">
        <text>L-ribulose + ATP = L-ribulose 5-phosphate + ADP + H(+)</text>
        <dbReference type="Rhea" id="RHEA:22072"/>
        <dbReference type="ChEBI" id="CHEBI:15378"/>
        <dbReference type="ChEBI" id="CHEBI:16880"/>
        <dbReference type="ChEBI" id="CHEBI:30616"/>
        <dbReference type="ChEBI" id="CHEBI:58226"/>
        <dbReference type="ChEBI" id="CHEBI:456216"/>
        <dbReference type="EC" id="2.7.1.16"/>
    </reaction>
</comment>
<comment type="pathway">
    <text evidence="1">Carbohydrate degradation; L-arabinose degradation via L-ribulose; D-xylulose 5-phosphate from L-arabinose (bacterial route): step 2/3.</text>
</comment>
<comment type="similarity">
    <text evidence="1">Belongs to the ribulokinase family.</text>
</comment>